<sequence length="675" mass="72863">MSDETTGSLGDAFSPMDTPTTTIMPPPADVDESGFSHSLLTFAAVMTFLIMIVGICGNLLTVVALLKCPKVRNVAAAFIISLCIADLLFCALVLPFQGLRFVQGTWRHGEVLCRLIPFIQYGNIGVSLLCIAMITINRYVMITHYSLYNRIYKRHWIAIMIAACWLFSYGMQLPTLLGAWGRFGYDARLQTCSIMSDRHGHSSKTTLFITAFVIPCLVIIACYAKIFWVVHKSEQRLKRHATKQNSIPNNLRPLAAATSMPSGDGANPSQVPAGCRVSSDSSSNYSTDVPDTTPGGAGGGAGVKQQPSRVKDQREVRAKRNEWRITKMVLAIFLSFVICYLPITIVKVADKDVEHPSLHIFSYIMLYLSACINPIIYVIMNKQYRKAYKTVVFCQPAARLLMPFGKGNGASSAAEKWKDTGLSNNHSRTIVSQMSAGATATATATAAAGTQPQSTSTQGPVQALELTARVPDLISKSSNLPLPQPLPQIPPAGARPSLTPPPPPSVLTATHSNGSGSQRLPLKKNNHSYTNSGFNSSVISANPSSSPSPSSSGGGIYRPGIGSMGNGSASIRRITMVGDDIILEEEELPPTPTASSPPQMQAPPPPPSSSRQTTMNALNTTPKTPIYMNVDSPKRNQSYSERNIPVPAREGHDQGVKDSQGLPSKLMDKKKFPKD</sequence>
<protein>
    <recommendedName>
        <fullName evidence="1">G-protein coupled receptor moody</fullName>
    </recommendedName>
</protein>
<name>MOODY_DROPS</name>
<reference key="1">
    <citation type="journal article" date="2005" name="Genome Res.">
        <title>Comparative genome sequencing of Drosophila pseudoobscura: chromosomal, gene, and cis-element evolution.</title>
        <authorList>
            <person name="Richards S."/>
            <person name="Liu Y."/>
            <person name="Bettencourt B.R."/>
            <person name="Hradecky P."/>
            <person name="Letovsky S."/>
            <person name="Nielsen R."/>
            <person name="Thornton K."/>
            <person name="Hubisz M.J."/>
            <person name="Chen R."/>
            <person name="Meisel R.P."/>
            <person name="Couronne O."/>
            <person name="Hua S."/>
            <person name="Smith M.A."/>
            <person name="Zhang P."/>
            <person name="Liu J."/>
            <person name="Bussemaker H.J."/>
            <person name="van Batenburg M.F."/>
            <person name="Howells S.L."/>
            <person name="Scherer S.E."/>
            <person name="Sodergren E."/>
            <person name="Matthews B.B."/>
            <person name="Crosby M.A."/>
            <person name="Schroeder A.J."/>
            <person name="Ortiz-Barrientos D."/>
            <person name="Rives C.M."/>
            <person name="Metzker M.L."/>
            <person name="Muzny D.M."/>
            <person name="Scott G."/>
            <person name="Steffen D."/>
            <person name="Wheeler D.A."/>
            <person name="Worley K.C."/>
            <person name="Havlak P."/>
            <person name="Durbin K.J."/>
            <person name="Egan A."/>
            <person name="Gill R."/>
            <person name="Hume J."/>
            <person name="Morgan M.B."/>
            <person name="Miner G."/>
            <person name="Hamilton C."/>
            <person name="Huang Y."/>
            <person name="Waldron L."/>
            <person name="Verduzco D."/>
            <person name="Clerc-Blankenburg K.P."/>
            <person name="Dubchak I."/>
            <person name="Noor M.A.F."/>
            <person name="Anderson W."/>
            <person name="White K.P."/>
            <person name="Clark A.G."/>
            <person name="Schaeffer S.W."/>
            <person name="Gelbart W.M."/>
            <person name="Weinstock G.M."/>
            <person name="Gibbs R.A."/>
        </authorList>
    </citation>
    <scope>NUCLEOTIDE SEQUENCE [LARGE SCALE GENOMIC DNA]</scope>
    <source>
        <strain>MV2-25 / Tucson 14011-0121.94</strain>
    </source>
</reference>
<dbReference type="EMBL" id="CH379063">
    <property type="protein sequence ID" value="EAL32411.2"/>
    <property type="molecule type" value="Genomic_DNA"/>
</dbReference>
<dbReference type="RefSeq" id="XP_001355354.2">
    <property type="nucleotide sequence ID" value="XM_001355318.3"/>
</dbReference>
<dbReference type="RefSeq" id="XP_015041049.1">
    <property type="nucleotide sequence ID" value="XM_015185563.1"/>
</dbReference>
<dbReference type="SMR" id="Q29J90"/>
<dbReference type="FunCoup" id="Q29J90">
    <property type="interactions" value="72"/>
</dbReference>
<dbReference type="STRING" id="46245.Q29J90"/>
<dbReference type="EnsemblMetazoa" id="FBtr0274563">
    <property type="protein sequence ID" value="FBpp0273001"/>
    <property type="gene ID" value="FBgn0078115"/>
</dbReference>
<dbReference type="EnsemblMetazoa" id="FBtr0379275">
    <property type="protein sequence ID" value="FBpp0339928"/>
    <property type="gene ID" value="FBgn0078115"/>
</dbReference>
<dbReference type="GeneID" id="4816028"/>
<dbReference type="KEGG" id="dpo:4816028"/>
<dbReference type="CTD" id="31168"/>
<dbReference type="eggNOG" id="KOG3656">
    <property type="taxonomic scope" value="Eukaryota"/>
</dbReference>
<dbReference type="HOGENOM" id="CLU_421673_0_0_1"/>
<dbReference type="InParanoid" id="Q29J90"/>
<dbReference type="OMA" id="QTCSIMS"/>
<dbReference type="Proteomes" id="UP000001819">
    <property type="component" value="Chromosome X"/>
</dbReference>
<dbReference type="Bgee" id="FBgn0078115">
    <property type="expression patterns" value="Expressed in insect adult head and 1 other cell type or tissue"/>
</dbReference>
<dbReference type="ExpressionAtlas" id="Q29J90">
    <property type="expression patterns" value="baseline"/>
</dbReference>
<dbReference type="GO" id="GO:0005886">
    <property type="term" value="C:plasma membrane"/>
    <property type="evidence" value="ECO:0000250"/>
    <property type="project" value="UniProtKB"/>
</dbReference>
<dbReference type="GO" id="GO:0004930">
    <property type="term" value="F:G protein-coupled receptor activity"/>
    <property type="evidence" value="ECO:0000250"/>
    <property type="project" value="UniProtKB"/>
</dbReference>
<dbReference type="GO" id="GO:0008366">
    <property type="term" value="P:axon ensheathment"/>
    <property type="evidence" value="ECO:0000250"/>
    <property type="project" value="UniProtKB"/>
</dbReference>
<dbReference type="GO" id="GO:0048148">
    <property type="term" value="P:behavioral response to cocaine"/>
    <property type="evidence" value="ECO:0000250"/>
    <property type="project" value="UniProtKB"/>
</dbReference>
<dbReference type="GO" id="GO:0007186">
    <property type="term" value="P:G protein-coupled receptor signaling pathway"/>
    <property type="evidence" value="ECO:0000250"/>
    <property type="project" value="UniProtKB"/>
</dbReference>
<dbReference type="CDD" id="cd15210">
    <property type="entry name" value="7tmA_GPR84-like"/>
    <property type="match status" value="1"/>
</dbReference>
<dbReference type="Gene3D" id="1.20.1070.10">
    <property type="entry name" value="Rhodopsin 7-helix transmembrane proteins"/>
    <property type="match status" value="1"/>
</dbReference>
<dbReference type="InterPro" id="IPR000276">
    <property type="entry name" value="GPCR_Rhodpsn"/>
</dbReference>
<dbReference type="InterPro" id="IPR017452">
    <property type="entry name" value="GPCR_Rhodpsn_7TM"/>
</dbReference>
<dbReference type="PANTHER" id="PTHR24228">
    <property type="entry name" value="B2 BRADYKININ RECEPTOR/ANGIOTENSIN II RECEPTOR"/>
    <property type="match status" value="1"/>
</dbReference>
<dbReference type="PANTHER" id="PTHR24228:SF63">
    <property type="entry name" value="G-PROTEIN COUPLED RECEPTOR MOODY"/>
    <property type="match status" value="1"/>
</dbReference>
<dbReference type="Pfam" id="PF00001">
    <property type="entry name" value="7tm_1"/>
    <property type="match status" value="1"/>
</dbReference>
<dbReference type="PRINTS" id="PR00237">
    <property type="entry name" value="GPCRRHODOPSN"/>
</dbReference>
<dbReference type="SMART" id="SM01381">
    <property type="entry name" value="7TM_GPCR_Srsx"/>
    <property type="match status" value="1"/>
</dbReference>
<dbReference type="SUPFAM" id="SSF81321">
    <property type="entry name" value="Family A G protein-coupled receptor-like"/>
    <property type="match status" value="1"/>
</dbReference>
<dbReference type="PROSITE" id="PS00237">
    <property type="entry name" value="G_PROTEIN_RECEP_F1_1"/>
    <property type="match status" value="1"/>
</dbReference>
<dbReference type="PROSITE" id="PS50262">
    <property type="entry name" value="G_PROTEIN_RECEP_F1_2"/>
    <property type="match status" value="1"/>
</dbReference>
<keyword id="KW-1003">Cell membrane</keyword>
<keyword id="KW-1015">Disulfide bond</keyword>
<keyword id="KW-0297">G-protein coupled receptor</keyword>
<keyword id="KW-0472">Membrane</keyword>
<keyword id="KW-0675">Receptor</keyword>
<keyword id="KW-1185">Reference proteome</keyword>
<keyword id="KW-0807">Transducer</keyword>
<keyword id="KW-0812">Transmembrane</keyword>
<keyword id="KW-1133">Transmembrane helix</keyword>
<organism>
    <name type="scientific">Drosophila pseudoobscura pseudoobscura</name>
    <name type="common">Fruit fly</name>
    <dbReference type="NCBI Taxonomy" id="46245"/>
    <lineage>
        <taxon>Eukaryota</taxon>
        <taxon>Metazoa</taxon>
        <taxon>Ecdysozoa</taxon>
        <taxon>Arthropoda</taxon>
        <taxon>Hexapoda</taxon>
        <taxon>Insecta</taxon>
        <taxon>Pterygota</taxon>
        <taxon>Neoptera</taxon>
        <taxon>Endopterygota</taxon>
        <taxon>Diptera</taxon>
        <taxon>Brachycera</taxon>
        <taxon>Muscomorpha</taxon>
        <taxon>Ephydroidea</taxon>
        <taxon>Drosophilidae</taxon>
        <taxon>Drosophila</taxon>
        <taxon>Sophophora</taxon>
    </lineage>
</organism>
<gene>
    <name evidence="1" type="primary">moody</name>
    <name type="ORF">GA18107</name>
</gene>
<evidence type="ECO:0000250" key="1">
    <source>
        <dbReference type="UniProtKB" id="Q9W534"/>
    </source>
</evidence>
<evidence type="ECO:0000255" key="2"/>
<evidence type="ECO:0000255" key="3">
    <source>
        <dbReference type="PROSITE-ProRule" id="PRU00521"/>
    </source>
</evidence>
<evidence type="ECO:0000256" key="4">
    <source>
        <dbReference type="SAM" id="MobiDB-lite"/>
    </source>
</evidence>
<feature type="chain" id="PRO_0000355098" description="G-protein coupled receptor moody">
    <location>
        <begin position="1"/>
        <end position="675"/>
    </location>
</feature>
<feature type="topological domain" description="Extracellular" evidence="2">
    <location>
        <begin position="1"/>
        <end position="44"/>
    </location>
</feature>
<feature type="transmembrane region" description="Helical; Name=1" evidence="2">
    <location>
        <begin position="45"/>
        <end position="65"/>
    </location>
</feature>
<feature type="topological domain" description="Cytoplasmic" evidence="2">
    <location>
        <begin position="66"/>
        <end position="73"/>
    </location>
</feature>
<feature type="transmembrane region" description="Helical; Name=2" evidence="2">
    <location>
        <begin position="74"/>
        <end position="94"/>
    </location>
</feature>
<feature type="topological domain" description="Extracellular" evidence="2">
    <location>
        <begin position="95"/>
        <end position="115"/>
    </location>
</feature>
<feature type="transmembrane region" description="Helical; Name=3" evidence="2">
    <location>
        <begin position="116"/>
        <end position="136"/>
    </location>
</feature>
<feature type="topological domain" description="Cytoplasmic" evidence="2">
    <location>
        <begin position="137"/>
        <end position="156"/>
    </location>
</feature>
<feature type="transmembrane region" description="Helical; Name=4" evidence="2">
    <location>
        <begin position="157"/>
        <end position="177"/>
    </location>
</feature>
<feature type="topological domain" description="Extracellular" evidence="2">
    <location>
        <begin position="178"/>
        <end position="206"/>
    </location>
</feature>
<feature type="transmembrane region" description="Helical; Name=5" evidence="2">
    <location>
        <begin position="207"/>
        <end position="227"/>
    </location>
</feature>
<feature type="topological domain" description="Cytoplasmic" evidence="2">
    <location>
        <begin position="228"/>
        <end position="327"/>
    </location>
</feature>
<feature type="transmembrane region" description="Helical; Name=6" evidence="2">
    <location>
        <begin position="328"/>
        <end position="348"/>
    </location>
</feature>
<feature type="topological domain" description="Extracellular" evidence="2">
    <location>
        <begin position="349"/>
        <end position="359"/>
    </location>
</feature>
<feature type="transmembrane region" description="Helical; Name=7" evidence="2">
    <location>
        <begin position="360"/>
        <end position="380"/>
    </location>
</feature>
<feature type="topological domain" description="Cytoplasmic" evidence="2">
    <location>
        <begin position="381"/>
        <end position="675"/>
    </location>
</feature>
<feature type="region of interest" description="Disordered" evidence="4">
    <location>
        <begin position="258"/>
        <end position="316"/>
    </location>
</feature>
<feature type="region of interest" description="Disordered" evidence="4">
    <location>
        <begin position="475"/>
        <end position="568"/>
    </location>
</feature>
<feature type="region of interest" description="Disordered" evidence="4">
    <location>
        <begin position="588"/>
        <end position="675"/>
    </location>
</feature>
<feature type="compositionally biased region" description="Low complexity" evidence="4">
    <location>
        <begin position="278"/>
        <end position="294"/>
    </location>
</feature>
<feature type="compositionally biased region" description="Low complexity" evidence="4">
    <location>
        <begin position="536"/>
        <end position="551"/>
    </location>
</feature>
<feature type="compositionally biased region" description="Gly residues" evidence="4">
    <location>
        <begin position="552"/>
        <end position="565"/>
    </location>
</feature>
<feature type="compositionally biased region" description="Basic and acidic residues" evidence="4">
    <location>
        <begin position="666"/>
        <end position="675"/>
    </location>
</feature>
<feature type="disulfide bond" evidence="3">
    <location>
        <begin position="113"/>
        <end position="192"/>
    </location>
</feature>
<accession>Q29J90</accession>
<comment type="function">
    <text evidence="1">Required in glia to regulate the acute sensitivity to cocaine and to continuously maintain the proper blood-brain barrier (BBB) function. A moody-mediated signaling pathway functions in glia to regulate nervous system insulation and drug-related behaviors (By similarity).</text>
</comment>
<comment type="subcellular location">
    <subcellularLocation>
        <location evidence="1">Cell membrane</location>
        <topology evidence="1">Multi-pass membrane protein</topology>
    </subcellularLocation>
</comment>
<comment type="similarity">
    <text evidence="3">Belongs to the G-protein coupled receptor 1 family.</text>
</comment>
<proteinExistence type="inferred from homology"/>